<reference key="1">
    <citation type="journal article" date="2006" name="Nature">
        <title>Insights from the genome of the biotrophic fungal plant pathogen Ustilago maydis.</title>
        <authorList>
            <person name="Kaemper J."/>
            <person name="Kahmann R."/>
            <person name="Boelker M."/>
            <person name="Ma L.-J."/>
            <person name="Brefort T."/>
            <person name="Saville B.J."/>
            <person name="Banuett F."/>
            <person name="Kronstad J.W."/>
            <person name="Gold S.E."/>
            <person name="Mueller O."/>
            <person name="Perlin M.H."/>
            <person name="Woesten H.A.B."/>
            <person name="de Vries R."/>
            <person name="Ruiz-Herrera J."/>
            <person name="Reynaga-Pena C.G."/>
            <person name="Snetselaar K."/>
            <person name="McCann M."/>
            <person name="Perez-Martin J."/>
            <person name="Feldbruegge M."/>
            <person name="Basse C.W."/>
            <person name="Steinberg G."/>
            <person name="Ibeas J.I."/>
            <person name="Holloman W."/>
            <person name="Guzman P."/>
            <person name="Farman M.L."/>
            <person name="Stajich J.E."/>
            <person name="Sentandreu R."/>
            <person name="Gonzalez-Prieto J.M."/>
            <person name="Kennell J.C."/>
            <person name="Molina L."/>
            <person name="Schirawski J."/>
            <person name="Mendoza-Mendoza A."/>
            <person name="Greilinger D."/>
            <person name="Muench K."/>
            <person name="Roessel N."/>
            <person name="Scherer M."/>
            <person name="Vranes M."/>
            <person name="Ladendorf O."/>
            <person name="Vincon V."/>
            <person name="Fuchs U."/>
            <person name="Sandrock B."/>
            <person name="Meng S."/>
            <person name="Ho E.C.H."/>
            <person name="Cahill M.J."/>
            <person name="Boyce K.J."/>
            <person name="Klose J."/>
            <person name="Klosterman S.J."/>
            <person name="Deelstra H.J."/>
            <person name="Ortiz-Castellanos L."/>
            <person name="Li W."/>
            <person name="Sanchez-Alonso P."/>
            <person name="Schreier P.H."/>
            <person name="Haeuser-Hahn I."/>
            <person name="Vaupel M."/>
            <person name="Koopmann E."/>
            <person name="Friedrich G."/>
            <person name="Voss H."/>
            <person name="Schlueter T."/>
            <person name="Margolis J."/>
            <person name="Platt D."/>
            <person name="Swimmer C."/>
            <person name="Gnirke A."/>
            <person name="Chen F."/>
            <person name="Vysotskaia V."/>
            <person name="Mannhaupt G."/>
            <person name="Gueldener U."/>
            <person name="Muensterkoetter M."/>
            <person name="Haase D."/>
            <person name="Oesterheld M."/>
            <person name="Mewes H.-W."/>
            <person name="Mauceli E.W."/>
            <person name="DeCaprio D."/>
            <person name="Wade C.M."/>
            <person name="Butler J."/>
            <person name="Young S.K."/>
            <person name="Jaffe D.B."/>
            <person name="Calvo S.E."/>
            <person name="Nusbaum C."/>
            <person name="Galagan J.E."/>
            <person name="Birren B.W."/>
        </authorList>
    </citation>
    <scope>NUCLEOTIDE SEQUENCE [LARGE SCALE GENOMIC DNA]</scope>
    <source>
        <strain>DSM 14603 / FGSC 9021 / UM521</strain>
    </source>
</reference>
<reference key="2">
    <citation type="submission" date="2014-09" db="EMBL/GenBank/DDBJ databases">
        <authorList>
            <person name="Gueldener U."/>
            <person name="Muensterkoetter M."/>
            <person name="Walter M.C."/>
            <person name="Mannhaupt G."/>
            <person name="Kahmann R."/>
        </authorList>
    </citation>
    <scope>GENOME REANNOTATION</scope>
    <source>
        <strain>DSM 14603 / FGSC 9021 / UM521</strain>
    </source>
</reference>
<dbReference type="EMBL" id="CM003144">
    <property type="protein sequence ID" value="KIS69699.1"/>
    <property type="molecule type" value="Genomic_DNA"/>
</dbReference>
<dbReference type="RefSeq" id="XP_011388802.1">
    <property type="nucleotide sequence ID" value="XM_011390500.1"/>
</dbReference>
<dbReference type="SMR" id="P0CT26"/>
<dbReference type="FunCoup" id="P0CT26">
    <property type="interactions" value="343"/>
</dbReference>
<dbReference type="STRING" id="237631.P0CT26"/>
<dbReference type="EnsemblFungi" id="KIS69699">
    <property type="protein sequence ID" value="KIS69699"/>
    <property type="gene ID" value="UMAG_10075"/>
</dbReference>
<dbReference type="GeneID" id="23566149"/>
<dbReference type="KEGG" id="uma:UMAG_10075"/>
<dbReference type="VEuPathDB" id="FungiDB:UMAG_10075"/>
<dbReference type="InParanoid" id="P0CT26"/>
<dbReference type="OrthoDB" id="10248987at2759"/>
<dbReference type="UniPathway" id="UPA00988"/>
<dbReference type="Proteomes" id="UP000000561">
    <property type="component" value="Chromosome 5"/>
</dbReference>
<dbReference type="GO" id="GO:0005829">
    <property type="term" value="C:cytosol"/>
    <property type="evidence" value="ECO:0007669"/>
    <property type="project" value="UniProtKB-UniRule"/>
</dbReference>
<dbReference type="GO" id="GO:0005634">
    <property type="term" value="C:nucleus"/>
    <property type="evidence" value="ECO:0000318"/>
    <property type="project" value="GO_Central"/>
</dbReference>
<dbReference type="GO" id="GO:0031386">
    <property type="term" value="F:protein tag activity"/>
    <property type="evidence" value="ECO:0000318"/>
    <property type="project" value="GO_Central"/>
</dbReference>
<dbReference type="GO" id="GO:0032447">
    <property type="term" value="P:protein urmylation"/>
    <property type="evidence" value="ECO:0000318"/>
    <property type="project" value="GO_Central"/>
</dbReference>
<dbReference type="GO" id="GO:0034227">
    <property type="term" value="P:tRNA thio-modification"/>
    <property type="evidence" value="ECO:0007669"/>
    <property type="project" value="UniProtKB-UniRule"/>
</dbReference>
<dbReference type="GO" id="GO:0002098">
    <property type="term" value="P:tRNA wobble uridine modification"/>
    <property type="evidence" value="ECO:0007669"/>
    <property type="project" value="UniProtKB-UniRule"/>
</dbReference>
<dbReference type="CDD" id="cd01764">
    <property type="entry name" value="Ubl_Urm1"/>
    <property type="match status" value="1"/>
</dbReference>
<dbReference type="Gene3D" id="3.10.20.30">
    <property type="match status" value="1"/>
</dbReference>
<dbReference type="HAMAP" id="MF_03048">
    <property type="entry name" value="Urm1"/>
    <property type="match status" value="1"/>
</dbReference>
<dbReference type="InterPro" id="IPR012675">
    <property type="entry name" value="Beta-grasp_dom_sf"/>
</dbReference>
<dbReference type="InterPro" id="IPR016155">
    <property type="entry name" value="Mopterin_synth/thiamin_S_b"/>
</dbReference>
<dbReference type="InterPro" id="IPR015221">
    <property type="entry name" value="Urm1"/>
</dbReference>
<dbReference type="PANTHER" id="PTHR14986">
    <property type="entry name" value="RURM1 PROTEIN"/>
    <property type="match status" value="1"/>
</dbReference>
<dbReference type="Pfam" id="PF09138">
    <property type="entry name" value="Urm1"/>
    <property type="match status" value="1"/>
</dbReference>
<dbReference type="PIRSF" id="PIRSF037379">
    <property type="entry name" value="Ubiquitin-related_modifier_1"/>
    <property type="match status" value="1"/>
</dbReference>
<dbReference type="SUPFAM" id="SSF54285">
    <property type="entry name" value="MoaD/ThiS"/>
    <property type="match status" value="1"/>
</dbReference>
<keyword id="KW-0963">Cytoplasm</keyword>
<keyword id="KW-1017">Isopeptide bond</keyword>
<keyword id="KW-1185">Reference proteome</keyword>
<keyword id="KW-0819">tRNA processing</keyword>
<keyword id="KW-0833">Ubl conjugation pathway</keyword>
<name>URM1_MYCMD</name>
<gene>
    <name evidence="1" type="primary">URM1</name>
    <name type="ORF">UMAG_10075</name>
</gene>
<evidence type="ECO:0000255" key="1">
    <source>
        <dbReference type="HAMAP-Rule" id="MF_03048"/>
    </source>
</evidence>
<protein>
    <recommendedName>
        <fullName evidence="1">Ubiquitin-related modifier 1</fullName>
    </recommendedName>
</protein>
<sequence>MSQDTVEIRVEFGGGTELLLAPPHEKKHTLTIPRTDTAGNETNVSFLIGHIRKNLITEREELFVDGDSVRPGILVLINNGDWELEGEGDYVLQDGDEVVFISTLHGG</sequence>
<comment type="function">
    <text evidence="1">Acts as a sulfur carrier required for 2-thiolation of mcm(5)S(2)U at tRNA wobble positions of cytosolic tRNA(Lys), tRNA(Glu) and tRNA(Gln). Serves as sulfur donor in tRNA 2-thiolation reaction by being thiocarboxylated (-COSH) at its C-terminus by the MOCS3 homolog UBA4. The sulfur is then transferred to tRNA to form 2-thiolation of mcm(5)S(2)U. Prior mcm(5) tRNA modification by the elongator complex is required for 2-thiolation. Also acts as a ubiquitin-like protein (UBL) that is covalently conjugated via an isopeptide bond to lysine residues of target proteins such as AHP1. The thiocarboxylated form serves as substrate for conjugation and oxidative stress specifically induces the formation of UBL-protein conjugates.</text>
</comment>
<comment type="pathway">
    <text evidence="1">tRNA modification; 5-methoxycarbonylmethyl-2-thiouridine-tRNA biosynthesis.</text>
</comment>
<comment type="subcellular location">
    <subcellularLocation>
        <location evidence="1">Cytoplasm</location>
    </subcellularLocation>
</comment>
<comment type="PTM">
    <text evidence="1">C-terminal thiocarboxylation occurs in 2 steps, it is first acyl-adenylated (-COAMP) via the hesA/moeB/thiF part of UBA4, then thiocarboxylated (-COSH) via the rhodanese domain of UBA4.</text>
</comment>
<comment type="similarity">
    <text evidence="1">Belongs to the URM1 family.</text>
</comment>
<proteinExistence type="inferred from homology"/>
<organism>
    <name type="scientific">Mycosarcoma maydis</name>
    <name type="common">Corn smut fungus</name>
    <name type="synonym">Ustilago maydis</name>
    <dbReference type="NCBI Taxonomy" id="5270"/>
    <lineage>
        <taxon>Eukaryota</taxon>
        <taxon>Fungi</taxon>
        <taxon>Dikarya</taxon>
        <taxon>Basidiomycota</taxon>
        <taxon>Ustilaginomycotina</taxon>
        <taxon>Ustilaginomycetes</taxon>
        <taxon>Ustilaginales</taxon>
        <taxon>Ustilaginaceae</taxon>
        <taxon>Mycosarcoma</taxon>
    </lineage>
</organism>
<accession>P0CT26</accession>
<accession>A0A0D1E0F8</accession>
<accession>Q4PCD5</accession>
<feature type="chain" id="PRO_0000423942" description="Ubiquitin-related modifier 1">
    <location>
        <begin position="1"/>
        <end position="107"/>
    </location>
</feature>
<feature type="modified residue" description="1-thioglycine" evidence="1">
    <location>
        <position position="107"/>
    </location>
</feature>
<feature type="cross-link" description="Glycyl lysine isopeptide (Gly-Lys) (interchain with K-? in acceptor proteins)" evidence="1">
    <location>
        <position position="107"/>
    </location>
</feature>